<evidence type="ECO:0000255" key="1">
    <source>
        <dbReference type="HAMAP-Rule" id="MF_01659"/>
    </source>
</evidence>
<sequence length="583" mass="62534">MTNRNIFYATTLVDELARAGLRFVCLAPGSRNTPLVLACARHPAIKVFSHLDERSAAFFALGLALATDTPAAVVCTSGSAAANFFPAIVEAHQAGVPLLALTADRPHELRDSGANQTIDQVKMFGGFVRWSVDLALPEATPPPVVVRSLRTLAARAMAIAGGEPPGVVHLNLPFRPPLEPTPVAGDITAPPDAAQPRQAGAPYTYCLTATRSGVPEAVIEQIASLLQQHERGLIVCGPRCPSGEFGALVSELADRTGYPALVDGVSGIRFGYPGVIGGYETFLFGEHSFPPPDVVVRFGAVPTSKWLNQYLDTAAPSAVIHVRAGGVWADDSHRVSHFIAADESAFIRALLPHLKERRGAWIQMFEEAEAQVWSAVEAALNDEPYFDGAAVYDAVSLLPEGAALFVGNSLPVRHLDQFGKPGARRIHAFANRGASGIDGNISTALGVGAGRPDTPMAAIVGDITFYHDMNGLLAVRRCGVPITIVLLNNDGGGIFHRLPINRFEPEFTDYFVTPHGLHFAHAAKMYGLDYVQVRDREAFRRAFRESIEARAATIIELRTDARADLARRPALMRSAKASDVRGL</sequence>
<organism>
    <name type="scientific">Roseiflexus sp. (strain RS-1)</name>
    <dbReference type="NCBI Taxonomy" id="357808"/>
    <lineage>
        <taxon>Bacteria</taxon>
        <taxon>Bacillati</taxon>
        <taxon>Chloroflexota</taxon>
        <taxon>Chloroflexia</taxon>
        <taxon>Chloroflexales</taxon>
        <taxon>Roseiflexineae</taxon>
        <taxon>Roseiflexaceae</taxon>
        <taxon>Roseiflexus</taxon>
    </lineage>
</organism>
<gene>
    <name evidence="1" type="primary">menD</name>
    <name type="ordered locus">RoseRS_0025</name>
</gene>
<keyword id="KW-0460">Magnesium</keyword>
<keyword id="KW-0464">Manganese</keyword>
<keyword id="KW-0474">Menaquinone biosynthesis</keyword>
<keyword id="KW-0479">Metal-binding</keyword>
<keyword id="KW-0786">Thiamine pyrophosphate</keyword>
<keyword id="KW-0808">Transferase</keyword>
<accession>A5UPB5</accession>
<dbReference type="EC" id="2.2.1.9" evidence="1"/>
<dbReference type="EMBL" id="CP000686">
    <property type="protein sequence ID" value="ABQ88468.1"/>
    <property type="molecule type" value="Genomic_DNA"/>
</dbReference>
<dbReference type="RefSeq" id="WP_011954828.1">
    <property type="nucleotide sequence ID" value="NC_009523.1"/>
</dbReference>
<dbReference type="SMR" id="A5UPB5"/>
<dbReference type="STRING" id="357808.RoseRS_0025"/>
<dbReference type="KEGG" id="rrs:RoseRS_0025"/>
<dbReference type="eggNOG" id="COG1165">
    <property type="taxonomic scope" value="Bacteria"/>
</dbReference>
<dbReference type="HOGENOM" id="CLU_006051_3_0_0"/>
<dbReference type="OrthoDB" id="9791859at2"/>
<dbReference type="UniPathway" id="UPA00079"/>
<dbReference type="UniPathway" id="UPA01057">
    <property type="reaction ID" value="UER00164"/>
</dbReference>
<dbReference type="Proteomes" id="UP000006554">
    <property type="component" value="Chromosome"/>
</dbReference>
<dbReference type="GO" id="GO:0070204">
    <property type="term" value="F:2-succinyl-5-enolpyruvyl-6-hydroxy-3-cyclohexene-1-carboxylic-acid synthase activity"/>
    <property type="evidence" value="ECO:0007669"/>
    <property type="project" value="UniProtKB-UniRule"/>
</dbReference>
<dbReference type="GO" id="GO:0000287">
    <property type="term" value="F:magnesium ion binding"/>
    <property type="evidence" value="ECO:0007669"/>
    <property type="project" value="UniProtKB-UniRule"/>
</dbReference>
<dbReference type="GO" id="GO:0030145">
    <property type="term" value="F:manganese ion binding"/>
    <property type="evidence" value="ECO:0007669"/>
    <property type="project" value="UniProtKB-UniRule"/>
</dbReference>
<dbReference type="GO" id="GO:0030976">
    <property type="term" value="F:thiamine pyrophosphate binding"/>
    <property type="evidence" value="ECO:0007669"/>
    <property type="project" value="UniProtKB-UniRule"/>
</dbReference>
<dbReference type="GO" id="GO:0009234">
    <property type="term" value="P:menaquinone biosynthetic process"/>
    <property type="evidence" value="ECO:0007669"/>
    <property type="project" value="UniProtKB-UniRule"/>
</dbReference>
<dbReference type="CDD" id="cd07037">
    <property type="entry name" value="TPP_PYR_MenD"/>
    <property type="match status" value="1"/>
</dbReference>
<dbReference type="CDD" id="cd02009">
    <property type="entry name" value="TPP_SHCHC_synthase"/>
    <property type="match status" value="1"/>
</dbReference>
<dbReference type="Gene3D" id="3.40.50.970">
    <property type="match status" value="2"/>
</dbReference>
<dbReference type="Gene3D" id="3.40.50.1220">
    <property type="entry name" value="TPP-binding domain"/>
    <property type="match status" value="1"/>
</dbReference>
<dbReference type="HAMAP" id="MF_01659">
    <property type="entry name" value="MenD"/>
    <property type="match status" value="1"/>
</dbReference>
<dbReference type="InterPro" id="IPR029035">
    <property type="entry name" value="DHS-like_NAD/FAD-binding_dom"/>
</dbReference>
<dbReference type="InterPro" id="IPR004433">
    <property type="entry name" value="MenaQ_synth_MenD"/>
</dbReference>
<dbReference type="InterPro" id="IPR032264">
    <property type="entry name" value="MenD_middle"/>
</dbReference>
<dbReference type="InterPro" id="IPR029061">
    <property type="entry name" value="THDP-binding"/>
</dbReference>
<dbReference type="InterPro" id="IPR012001">
    <property type="entry name" value="Thiamin_PyroP_enz_TPP-bd_dom"/>
</dbReference>
<dbReference type="InterPro" id="IPR011766">
    <property type="entry name" value="TPP_enzyme_TPP-bd"/>
</dbReference>
<dbReference type="NCBIfam" id="TIGR00173">
    <property type="entry name" value="menD"/>
    <property type="match status" value="1"/>
</dbReference>
<dbReference type="PANTHER" id="PTHR42916">
    <property type="entry name" value="2-SUCCINYL-5-ENOLPYRUVYL-6-HYDROXY-3-CYCLOHEXENE-1-CARBOXYLATE SYNTHASE"/>
    <property type="match status" value="1"/>
</dbReference>
<dbReference type="PANTHER" id="PTHR42916:SF1">
    <property type="entry name" value="PROTEIN PHYLLO, CHLOROPLASTIC"/>
    <property type="match status" value="1"/>
</dbReference>
<dbReference type="Pfam" id="PF02775">
    <property type="entry name" value="TPP_enzyme_C"/>
    <property type="match status" value="1"/>
</dbReference>
<dbReference type="Pfam" id="PF16582">
    <property type="entry name" value="TPP_enzyme_M_2"/>
    <property type="match status" value="1"/>
</dbReference>
<dbReference type="Pfam" id="PF02776">
    <property type="entry name" value="TPP_enzyme_N"/>
    <property type="match status" value="1"/>
</dbReference>
<dbReference type="PIRSF" id="PIRSF004983">
    <property type="entry name" value="MenD"/>
    <property type="match status" value="1"/>
</dbReference>
<dbReference type="SUPFAM" id="SSF52467">
    <property type="entry name" value="DHS-like NAD/FAD-binding domain"/>
    <property type="match status" value="1"/>
</dbReference>
<dbReference type="SUPFAM" id="SSF52518">
    <property type="entry name" value="Thiamin diphosphate-binding fold (THDP-binding)"/>
    <property type="match status" value="2"/>
</dbReference>
<name>MEND_ROSS1</name>
<proteinExistence type="inferred from homology"/>
<comment type="function">
    <text evidence="1">Catalyzes the thiamine diphosphate-dependent decarboxylation of 2-oxoglutarate and the subsequent addition of the resulting succinic semialdehyde-thiamine pyrophosphate anion to isochorismate to yield 2-succinyl-5-enolpyruvyl-6-hydroxy-3-cyclohexene-1-carboxylate (SEPHCHC).</text>
</comment>
<comment type="catalytic activity">
    <reaction evidence="1">
        <text>isochorismate + 2-oxoglutarate + H(+) = 5-enolpyruvoyl-6-hydroxy-2-succinyl-cyclohex-3-ene-1-carboxylate + CO2</text>
        <dbReference type="Rhea" id="RHEA:25593"/>
        <dbReference type="ChEBI" id="CHEBI:15378"/>
        <dbReference type="ChEBI" id="CHEBI:16526"/>
        <dbReference type="ChEBI" id="CHEBI:16810"/>
        <dbReference type="ChEBI" id="CHEBI:29780"/>
        <dbReference type="ChEBI" id="CHEBI:58818"/>
        <dbReference type="EC" id="2.2.1.9"/>
    </reaction>
</comment>
<comment type="cofactor">
    <cofactor evidence="1">
        <name>Mg(2+)</name>
        <dbReference type="ChEBI" id="CHEBI:18420"/>
    </cofactor>
    <cofactor evidence="1">
        <name>Mn(2+)</name>
        <dbReference type="ChEBI" id="CHEBI:29035"/>
    </cofactor>
</comment>
<comment type="cofactor">
    <cofactor evidence="1">
        <name>thiamine diphosphate</name>
        <dbReference type="ChEBI" id="CHEBI:58937"/>
    </cofactor>
    <text evidence="1">Binds 1 thiamine pyrophosphate per subunit.</text>
</comment>
<comment type="pathway">
    <text evidence="1">Quinol/quinone metabolism; 1,4-dihydroxy-2-naphthoate biosynthesis; 1,4-dihydroxy-2-naphthoate from chorismate: step 2/7.</text>
</comment>
<comment type="pathway">
    <text evidence="1">Quinol/quinone metabolism; menaquinone biosynthesis.</text>
</comment>
<comment type="subunit">
    <text evidence="1">Homodimer.</text>
</comment>
<comment type="similarity">
    <text evidence="1">Belongs to the TPP enzyme family. MenD subfamily.</text>
</comment>
<protein>
    <recommendedName>
        <fullName evidence="1">2-succinyl-5-enolpyruvyl-6-hydroxy-3-cyclohexene-1-carboxylate synthase</fullName>
        <shortName evidence="1">SEPHCHC synthase</shortName>
        <ecNumber evidence="1">2.2.1.9</ecNumber>
    </recommendedName>
    <alternativeName>
        <fullName evidence="1">Menaquinone biosynthesis protein MenD</fullName>
    </alternativeName>
</protein>
<feature type="chain" id="PRO_0000341816" description="2-succinyl-5-enolpyruvyl-6-hydroxy-3-cyclohexene-1-carboxylate synthase">
    <location>
        <begin position="1"/>
        <end position="583"/>
    </location>
</feature>
<reference key="1">
    <citation type="submission" date="2007-04" db="EMBL/GenBank/DDBJ databases">
        <title>Complete sequence of Roseiflexus sp. RS-1.</title>
        <authorList>
            <consortium name="US DOE Joint Genome Institute"/>
            <person name="Copeland A."/>
            <person name="Lucas S."/>
            <person name="Lapidus A."/>
            <person name="Barry K."/>
            <person name="Detter J.C."/>
            <person name="Glavina del Rio T."/>
            <person name="Hammon N."/>
            <person name="Israni S."/>
            <person name="Dalin E."/>
            <person name="Tice H."/>
            <person name="Pitluck S."/>
            <person name="Chertkov O."/>
            <person name="Brettin T."/>
            <person name="Bruce D."/>
            <person name="Han C."/>
            <person name="Schmutz J."/>
            <person name="Larimer F."/>
            <person name="Land M."/>
            <person name="Hauser L."/>
            <person name="Kyrpides N."/>
            <person name="Mikhailova N."/>
            <person name="Bryant D.A."/>
            <person name="Richardson P."/>
        </authorList>
    </citation>
    <scope>NUCLEOTIDE SEQUENCE [LARGE SCALE GENOMIC DNA]</scope>
    <source>
        <strain>RS-1</strain>
    </source>
</reference>